<accession>Q5UR68</accession>
<evidence type="ECO:0000256" key="1">
    <source>
        <dbReference type="SAM" id="MobiDB-lite"/>
    </source>
</evidence>
<dbReference type="EMBL" id="AY653733">
    <property type="protein sequence ID" value="AAV50878.1"/>
    <property type="molecule type" value="Genomic_DNA"/>
</dbReference>
<dbReference type="SMR" id="Q5UR68"/>
<dbReference type="KEGG" id="vg:9925256"/>
<dbReference type="Proteomes" id="UP000001134">
    <property type="component" value="Genome"/>
</dbReference>
<organism>
    <name type="scientific">Acanthamoeba polyphaga mimivirus</name>
    <name type="common">APMV</name>
    <dbReference type="NCBI Taxonomy" id="212035"/>
    <lineage>
        <taxon>Viruses</taxon>
        <taxon>Varidnaviria</taxon>
        <taxon>Bamfordvirae</taxon>
        <taxon>Nucleocytoviricota</taxon>
        <taxon>Megaviricetes</taxon>
        <taxon>Imitervirales</taxon>
        <taxon>Mimiviridae</taxon>
        <taxon>Megamimivirinae</taxon>
        <taxon>Mimivirus</taxon>
        <taxon>Mimivirus bradfordmassiliense</taxon>
    </lineage>
</organism>
<gene>
    <name type="ordered locus">MIMI_R616</name>
</gene>
<proteinExistence type="predicted"/>
<organismHost>
    <name type="scientific">Acanthamoeba polyphaga</name>
    <name type="common">Amoeba</name>
    <dbReference type="NCBI Taxonomy" id="5757"/>
</organismHost>
<keyword id="KW-1185">Reference proteome</keyword>
<reference key="1">
    <citation type="journal article" date="2004" name="Science">
        <title>The 1.2-megabase genome sequence of Mimivirus.</title>
        <authorList>
            <person name="Raoult D."/>
            <person name="Audic S."/>
            <person name="Robert C."/>
            <person name="Abergel C."/>
            <person name="Renesto P."/>
            <person name="Ogata H."/>
            <person name="La Scola B."/>
            <person name="Susan M."/>
            <person name="Claverie J.-M."/>
        </authorList>
    </citation>
    <scope>NUCLEOTIDE SEQUENCE [LARGE SCALE GENOMIC DNA]</scope>
    <source>
        <strain>Rowbotham-Bradford</strain>
    </source>
</reference>
<name>YR616_MIMIV</name>
<protein>
    <recommendedName>
        <fullName>Uncharacterized protein R616</fullName>
    </recommendedName>
</protein>
<feature type="chain" id="PRO_0000244779" description="Uncharacterized protein R616">
    <location>
        <begin position="1"/>
        <end position="353"/>
    </location>
</feature>
<feature type="region of interest" description="Disordered" evidence="1">
    <location>
        <begin position="1"/>
        <end position="24"/>
    </location>
</feature>
<feature type="region of interest" description="Disordered" evidence="1">
    <location>
        <begin position="245"/>
        <end position="280"/>
    </location>
</feature>
<feature type="region of interest" description="Disordered" evidence="1">
    <location>
        <begin position="305"/>
        <end position="353"/>
    </location>
</feature>
<feature type="compositionally biased region" description="Low complexity" evidence="1">
    <location>
        <begin position="9"/>
        <end position="24"/>
    </location>
</feature>
<feature type="compositionally biased region" description="Basic and acidic residues" evidence="1">
    <location>
        <begin position="254"/>
        <end position="280"/>
    </location>
</feature>
<feature type="compositionally biased region" description="Low complexity" evidence="1">
    <location>
        <begin position="321"/>
        <end position="332"/>
    </location>
</feature>
<feature type="compositionally biased region" description="Acidic residues" evidence="1">
    <location>
        <begin position="342"/>
        <end position="353"/>
    </location>
</feature>
<sequence length="353" mass="39779">MSTSRNVPNKKNNTKQQKYQQQSQKQFKTVRATGNGEKEPFSLAMSYGHIPVVTASVHLLSSFLLRHLSFISSKEEKVFGSLTVFAAEAADKVSEHRQCLQRLINETMDSNMTSYSADVFNIQENQVKRDNGPTHYSVWYRSGNFAPNSILESNPVTLVDADAFDLIKQLTYRLGKAIFRLHNNGNSSFDIYVKDNLSNFKIYLNNLADHLEKDDIYDNFLDMVESQAKIKKDYYLNNRNLLVDNKSSNRTHHKSGDKSTVKSTDKQVEKKVEESSEKVPEVPKKIVIPKSACKPVVGGVSFAQAAGKSQTANSDTKEDQVTTSTSESTVEVKSLEVKETKEPDEEVFEDLNN</sequence>